<dbReference type="EMBL" id="CP001050">
    <property type="protein sequence ID" value="ACF29629.1"/>
    <property type="molecule type" value="Genomic_DNA"/>
</dbReference>
<dbReference type="RefSeq" id="WP_003688548.1">
    <property type="nucleotide sequence ID" value="NC_011035.1"/>
</dbReference>
<dbReference type="SMR" id="B4RLE2"/>
<dbReference type="KEGG" id="ngk:NGK_0952"/>
<dbReference type="HOGENOM" id="CLU_114342_3_0_4"/>
<dbReference type="Proteomes" id="UP000002564">
    <property type="component" value="Chromosome"/>
</dbReference>
<dbReference type="GO" id="GO:0005886">
    <property type="term" value="C:plasma membrane"/>
    <property type="evidence" value="ECO:0007669"/>
    <property type="project" value="UniProtKB-SubCell"/>
</dbReference>
<dbReference type="GO" id="GO:0062054">
    <property type="term" value="F:fluoride channel activity"/>
    <property type="evidence" value="ECO:0007669"/>
    <property type="project" value="UniProtKB-UniRule"/>
</dbReference>
<dbReference type="GO" id="GO:0046872">
    <property type="term" value="F:metal ion binding"/>
    <property type="evidence" value="ECO:0007669"/>
    <property type="project" value="UniProtKB-KW"/>
</dbReference>
<dbReference type="GO" id="GO:0140114">
    <property type="term" value="P:cellular detoxification of fluoride"/>
    <property type="evidence" value="ECO:0007669"/>
    <property type="project" value="UniProtKB-UniRule"/>
</dbReference>
<dbReference type="HAMAP" id="MF_00454">
    <property type="entry name" value="FluC"/>
    <property type="match status" value="1"/>
</dbReference>
<dbReference type="InterPro" id="IPR003691">
    <property type="entry name" value="FluC"/>
</dbReference>
<dbReference type="NCBIfam" id="NF010826">
    <property type="entry name" value="PRK14230.1"/>
    <property type="match status" value="1"/>
</dbReference>
<dbReference type="PANTHER" id="PTHR28259">
    <property type="entry name" value="FLUORIDE EXPORT PROTEIN 1-RELATED"/>
    <property type="match status" value="1"/>
</dbReference>
<dbReference type="PANTHER" id="PTHR28259:SF1">
    <property type="entry name" value="FLUORIDE EXPORT PROTEIN 1-RELATED"/>
    <property type="match status" value="1"/>
</dbReference>
<dbReference type="Pfam" id="PF02537">
    <property type="entry name" value="CRCB"/>
    <property type="match status" value="1"/>
</dbReference>
<reference key="1">
    <citation type="journal article" date="2008" name="J. Bacteriol.">
        <title>Complete genome sequence of Neisseria gonorrhoeae NCCP11945.</title>
        <authorList>
            <person name="Chung G.T."/>
            <person name="Yoo J.S."/>
            <person name="Oh H.B."/>
            <person name="Lee Y.S."/>
            <person name="Cha S.H."/>
            <person name="Kim S.J."/>
            <person name="Yoo C.K."/>
        </authorList>
    </citation>
    <scope>NUCLEOTIDE SEQUENCE [LARGE SCALE GENOMIC DNA]</scope>
    <source>
        <strain>NCCP11945</strain>
    </source>
</reference>
<keyword id="KW-0997">Cell inner membrane</keyword>
<keyword id="KW-1003">Cell membrane</keyword>
<keyword id="KW-0407">Ion channel</keyword>
<keyword id="KW-0406">Ion transport</keyword>
<keyword id="KW-0472">Membrane</keyword>
<keyword id="KW-0479">Metal-binding</keyword>
<keyword id="KW-0915">Sodium</keyword>
<keyword id="KW-0812">Transmembrane</keyword>
<keyword id="KW-1133">Transmembrane helix</keyword>
<keyword id="KW-0813">Transport</keyword>
<comment type="function">
    <text evidence="1">Fluoride-specific ion channel. Important for reducing fluoride concentration in the cell, thus reducing its toxicity.</text>
</comment>
<comment type="catalytic activity">
    <reaction evidence="1">
        <text>fluoride(in) = fluoride(out)</text>
        <dbReference type="Rhea" id="RHEA:76159"/>
        <dbReference type="ChEBI" id="CHEBI:17051"/>
    </reaction>
    <physiologicalReaction direction="left-to-right" evidence="1">
        <dbReference type="Rhea" id="RHEA:76160"/>
    </physiologicalReaction>
</comment>
<comment type="activity regulation">
    <text evidence="1">Na(+) is not transported, but it plays an essential structural role and its presence is essential for fluoride channel function.</text>
</comment>
<comment type="subcellular location">
    <subcellularLocation>
        <location evidence="1">Cell inner membrane</location>
        <topology evidence="1">Multi-pass membrane protein</topology>
    </subcellularLocation>
</comment>
<comment type="similarity">
    <text evidence="1">Belongs to the fluoride channel Fluc/FEX (TC 1.A.43) family.</text>
</comment>
<sequence>MLSNILPLSIGAIFGTTARWLLNLAVPASLSPATGNLFANWTGALLIGIFAETVSHPQWKLLLITGFFGSLTTLSGFSLETVTLLQSNRPASALANIFLHTAGSLLLTWLGLKIGTAVK</sequence>
<gene>
    <name evidence="1" type="primary">fluC</name>
    <name evidence="1" type="synonym">crcB</name>
    <name type="ordered locus">NGK_0952</name>
</gene>
<accession>B4RLE2</accession>
<evidence type="ECO:0000255" key="1">
    <source>
        <dbReference type="HAMAP-Rule" id="MF_00454"/>
    </source>
</evidence>
<name>FLUC_NEIG2</name>
<proteinExistence type="inferred from homology"/>
<protein>
    <recommendedName>
        <fullName evidence="1">Fluoride-specific ion channel FluC</fullName>
    </recommendedName>
</protein>
<organism>
    <name type="scientific">Neisseria gonorrhoeae (strain NCCP11945)</name>
    <dbReference type="NCBI Taxonomy" id="521006"/>
    <lineage>
        <taxon>Bacteria</taxon>
        <taxon>Pseudomonadati</taxon>
        <taxon>Pseudomonadota</taxon>
        <taxon>Betaproteobacteria</taxon>
        <taxon>Neisseriales</taxon>
        <taxon>Neisseriaceae</taxon>
        <taxon>Neisseria</taxon>
    </lineage>
</organism>
<feature type="chain" id="PRO_1000125141" description="Fluoride-specific ion channel FluC">
    <location>
        <begin position="1"/>
        <end position="119"/>
    </location>
</feature>
<feature type="transmembrane region" description="Helical" evidence="1">
    <location>
        <begin position="5"/>
        <end position="25"/>
    </location>
</feature>
<feature type="transmembrane region" description="Helical" evidence="1">
    <location>
        <begin position="30"/>
        <end position="50"/>
    </location>
</feature>
<feature type="transmembrane region" description="Helical" evidence="1">
    <location>
        <begin position="59"/>
        <end position="79"/>
    </location>
</feature>
<feature type="transmembrane region" description="Helical" evidence="1">
    <location>
        <begin position="92"/>
        <end position="112"/>
    </location>
</feature>
<feature type="binding site" evidence="1">
    <location>
        <position position="69"/>
    </location>
    <ligand>
        <name>Na(+)</name>
        <dbReference type="ChEBI" id="CHEBI:29101"/>
        <note>structural</note>
    </ligand>
</feature>
<feature type="binding site" evidence="1">
    <location>
        <position position="72"/>
    </location>
    <ligand>
        <name>Na(+)</name>
        <dbReference type="ChEBI" id="CHEBI:29101"/>
        <note>structural</note>
    </ligand>
</feature>